<name>YCF2_PINKO</name>
<organism>
    <name type="scientific">Pinus koraiensis</name>
    <name type="common">Korean pine</name>
    <dbReference type="NCBI Taxonomy" id="88728"/>
    <lineage>
        <taxon>Eukaryota</taxon>
        <taxon>Viridiplantae</taxon>
        <taxon>Streptophyta</taxon>
        <taxon>Embryophyta</taxon>
        <taxon>Tracheophyta</taxon>
        <taxon>Spermatophyta</taxon>
        <taxon>Pinopsida</taxon>
        <taxon>Pinidae</taxon>
        <taxon>Conifers I</taxon>
        <taxon>Pinales</taxon>
        <taxon>Pinaceae</taxon>
        <taxon>Pinus</taxon>
        <taxon>Pinus subgen. Strobus</taxon>
    </lineage>
</organism>
<dbReference type="EMBL" id="AY228468">
    <property type="protein sequence ID" value="ABP35500.1"/>
    <property type="molecule type" value="Genomic_DNA"/>
</dbReference>
<dbReference type="RefSeq" id="YP_001152259.1">
    <property type="nucleotide sequence ID" value="NC_004677.2"/>
</dbReference>
<dbReference type="SMR" id="Q85WV5"/>
<dbReference type="GeneID" id="5048549"/>
<dbReference type="GO" id="GO:0009570">
    <property type="term" value="C:chloroplast stroma"/>
    <property type="evidence" value="ECO:0007669"/>
    <property type="project" value="UniProtKB-SubCell"/>
</dbReference>
<dbReference type="GO" id="GO:0005524">
    <property type="term" value="F:ATP binding"/>
    <property type="evidence" value="ECO:0007669"/>
    <property type="project" value="UniProtKB-KW"/>
</dbReference>
<dbReference type="GO" id="GO:0016887">
    <property type="term" value="F:ATP hydrolysis activity"/>
    <property type="evidence" value="ECO:0007669"/>
    <property type="project" value="InterPro"/>
</dbReference>
<dbReference type="CDD" id="cd19505">
    <property type="entry name" value="RecA-like_Ycf2"/>
    <property type="match status" value="1"/>
</dbReference>
<dbReference type="Gene3D" id="3.40.50.300">
    <property type="entry name" value="P-loop containing nucleotide triphosphate hydrolases"/>
    <property type="match status" value="1"/>
</dbReference>
<dbReference type="HAMAP" id="MF_01330">
    <property type="entry name" value="Ycf2"/>
    <property type="match status" value="1"/>
</dbReference>
<dbReference type="InterPro" id="IPR003593">
    <property type="entry name" value="AAA+_ATPase"/>
</dbReference>
<dbReference type="InterPro" id="IPR003959">
    <property type="entry name" value="ATPase_AAA_core"/>
</dbReference>
<dbReference type="InterPro" id="IPR027417">
    <property type="entry name" value="P-loop_NTPase"/>
</dbReference>
<dbReference type="InterPro" id="IPR008543">
    <property type="entry name" value="Uncharacterised_Ycf2"/>
</dbReference>
<dbReference type="InterPro" id="IPR056777">
    <property type="entry name" value="Ycf2_N"/>
</dbReference>
<dbReference type="PANTHER" id="PTHR33078:SF100">
    <property type="entry name" value="PROTEIN YCF2"/>
    <property type="match status" value="1"/>
</dbReference>
<dbReference type="PANTHER" id="PTHR33078">
    <property type="entry name" value="PROTEIN YCF2-RELATED"/>
    <property type="match status" value="1"/>
</dbReference>
<dbReference type="Pfam" id="PF00004">
    <property type="entry name" value="AAA"/>
    <property type="match status" value="1"/>
</dbReference>
<dbReference type="Pfam" id="PF05695">
    <property type="entry name" value="Ycf2"/>
    <property type="match status" value="4"/>
</dbReference>
<dbReference type="SMART" id="SM00382">
    <property type="entry name" value="AAA"/>
    <property type="match status" value="1"/>
</dbReference>
<dbReference type="SUPFAM" id="SSF52540">
    <property type="entry name" value="P-loop containing nucleoside triphosphate hydrolases"/>
    <property type="match status" value="1"/>
</dbReference>
<sequence length="2062" mass="244953">MKKKKGERGGSKEMKKRRSWIIKLEEIQSYQFLCNPWTKSNLMRFLIQILSHRERLIKLFDPRILSTLLLRDLRRSNPYFLVKGIVVLTLSILIYHFNHKSSMIEKKNFYSMKLFPIHNFMELGNETPEEYLKPFTKNWLIFPHLFLSFQLKRSYNRFIEHFDPISFNSGYGRNTNKKDEMISENQGPPSKTHLENNEKDLNLKIDSTLNSTENEYWEPEKDLCEDSFIEREQTKIEIESDLSSKCLSEYYPISWAKELFTEDQRYTEENSFPLERKRFIENFTKSIRYSFFYIWPMDEPCMGGPSATKKPIEDFNLSKRLLKRQQNVFSQYLRDSKSYSLMNRIVDLWKIKTYFEIENSSSNYAIPSDPGWNILNILHNNFRSKTKKIVLEMTDQFTLSITKPSQVHDQIYCNIYYYMNPLYELNKNGSLRSDRIFNHREKLKNQSLWVLLNIIDKADDYLDQIIDKQLSQIDSKNRLEIGTPFNNYRTEALSWYESIRYKIARYSENLFNRFYFINRFSHNLKNQIRTNWIENENLNNVTKDTIDRHSSSWKKIQREWLNRSIIRTDKNINRNLNVYKWSHQTEYFMKYLKHKKNYFQRVFDLIESCTNTNRNKIGWKDYFQFFQHTVKILNSNFDIISNLNSKFDIVISILDSHLNKLKSIDPQLLKKNNLDINDLLDLMGTLIVHLKKLKPFLFLLDDHNLSQRSKLLIDEGTIAPFVPNDIPINPSIIDFFYNEKNRMESFDNTDFSTISNDRENWLNPVKLSDQSSLRASFHGANTLQFFDYLHHPRPNYRKRLPSDMKRIYIKRKNLTYGQLFNLLLIHNNISSLLIGEIGPVHSEKETISLIKSQVSNIFLPKYLQRKRSGEQPFVLIYDLYRSFNLLTQLNPFVRDKRYISSIEEISTTPLTKEQIVNLEKTFCQPFFNRSDSEENNLDKCLKRGFSSNVGLIQTRSYQDDLLSEIFSNKNQEMFHRIQDWFVTKSFKNIIGNEGIDGRSTLSNSSKEEQKIKPSPHFNEPAKKQEMYRISQIDSILSKWDLFKTYMPWFFTSAWCKYLENMLLYTLPEILLHGSNPFVSILQDIKHNIMLKWNILWELSHPLWEPIKWKLRTNLTNLLNFRFRTTLMNKFFSSCEDCFIEETSDREWTHLRLLNARRYEYGILIPFFVLTYSILRYFKVIYSAFINLKIDFELIQYLEDPSYVIELQKLINPPVYNYLLYYIDIESLPSTKRKRKNRKLNLLITIIRELNGLCSSMDISEKEMEILVQFLMTEKNLSQFESNMTVSHIFLKKEFGDQITGQPGLIHLRYLAHTYQKGLMNYELNPFCLAENRIFLAFYQKITSSQILCQPNPKMPFSFHSGSLFSKGILLIGPMGTGRSYLIKSLAADSYVPLIRISLKKLLYGKFLYYPDPGRIPTEFNTFWRDTIDHFHITFELAKRMSPCIIWIPNIHELNVNDTITHLFGLGFTDSFLGLLLNYISRGGEKDSIRNILFIASTHIPQRVDPALIAPNRLDSSINIRMLVIPQRQREFPILLCSKGLYSEKEVSCPDEFGSITIDSDARDLAALANEALITSITRKKSVIDTNTIRYAIYSQICHLQSMDNQVGSSQNDERLIYKVGKAFIQNTLRRNSPMNPLSTKKELWKKRFCYLSEWYLEPSIAETTMKELTILPHILGCLAGSAARDSWSISERNRENWIPLDKFAEHDLDLASSLLESILVEFPFSRLGICRGKSDKDQSKFDKDQITFVPQPKMRNNHMIRFLKEYELKFTIATKKMYRDMDMDEELIKSVVWTPRTWRLSFLRSNRFDHTKTPNSLGSSYRFGSKKKAQIERSKFARQYPRQYKSSEKPTFCRGKRFLWDPFLFQEQRPVFSRREFFADEELLKRLYITYGSRRLLAKPNFFPKQSFQSAFHRYDSKYGINPGLIMNSWKPLSLRHRHIEHFKHIQEIGIHLERIQPYSSPYLYKCWLIENSRERVDRFQSLIHRQKRWLGTNSLLSNESFLYNTLFESYQYLSNLFLSNRVLLDQITKTLLEKECLFPNEIEHSIYTTGLRFDISWENLE</sequence>
<comment type="function">
    <text>Probable ATPase of unknown function. Its presence in a non-photosynthetic plant (Epifagus virginiana) and experiments in tobacco indicate that it has an essential function which is probably not related to photosynthesis.</text>
</comment>
<comment type="subcellular location">
    <subcellularLocation>
        <location evidence="1">Plastid</location>
        <location evidence="1">Chloroplast stroma</location>
    </subcellularLocation>
</comment>
<comment type="similarity">
    <text evidence="4">Belongs to the Ycf2 family.</text>
</comment>
<protein>
    <recommendedName>
        <fullName>Protein Ycf2</fullName>
    </recommendedName>
</protein>
<keyword id="KW-0067">ATP-binding</keyword>
<keyword id="KW-0150">Chloroplast</keyword>
<keyword id="KW-0547">Nucleotide-binding</keyword>
<keyword id="KW-0934">Plastid</keyword>
<accession>Q85WV5</accession>
<accession>A4QMG3</accession>
<proteinExistence type="inferred from homology"/>
<geneLocation type="chloroplast"/>
<gene>
    <name type="primary">ycf2</name>
</gene>
<evidence type="ECO:0000250" key="1"/>
<evidence type="ECO:0000255" key="2"/>
<evidence type="ECO:0000256" key="3">
    <source>
        <dbReference type="SAM" id="MobiDB-lite"/>
    </source>
</evidence>
<evidence type="ECO:0000305" key="4"/>
<reference key="1">
    <citation type="submission" date="2003-02" db="EMBL/GenBank/DDBJ databases">
        <title>Complete nucleotide sequence of Pinus koraiensis.</title>
        <authorList>
            <person name="Noh E.W."/>
            <person name="Lee J.S."/>
            <person name="Choi Y.I."/>
            <person name="Han M.S."/>
            <person name="Yi Y.S."/>
            <person name="Han S.U."/>
        </authorList>
    </citation>
    <scope>NUCLEOTIDE SEQUENCE [LARGE SCALE GENOMIC DNA]</scope>
    <source>
        <strain>KangWon16</strain>
    </source>
</reference>
<reference key="2">
    <citation type="submission" date="2007-04" db="EMBL/GenBank/DDBJ databases">
        <authorList>
            <person name="Noh E.W."/>
            <person name="Lee J.S."/>
            <person name="Choi Y.I."/>
            <person name="Han M.S."/>
            <person name="Yi Y.S."/>
            <person name="Han S.U."/>
        </authorList>
    </citation>
    <scope>SEQUENCE REVISION</scope>
</reference>
<feature type="chain" id="PRO_0000223066" description="Protein Ycf2">
    <location>
        <begin position="1"/>
        <end position="2062"/>
    </location>
</feature>
<feature type="region of interest" description="Disordered" evidence="3">
    <location>
        <begin position="176"/>
        <end position="197"/>
    </location>
</feature>
<feature type="region of interest" description="Disordered" evidence="3">
    <location>
        <begin position="997"/>
        <end position="1018"/>
    </location>
</feature>
<feature type="binding site" evidence="2">
    <location>
        <begin position="1372"/>
        <end position="1379"/>
    </location>
    <ligand>
        <name>ATP</name>
        <dbReference type="ChEBI" id="CHEBI:30616"/>
    </ligand>
</feature>